<proteinExistence type="inferred from homology"/>
<accession>E1BP92</accession>
<accession>E1BCA3</accession>
<sequence>MTSREQLVQHVLQELQEAVESEGLEGLVGAALEAKQVLSSFALPTRRGGGPGPQVLEVDSVALSLYPEDAPRNMLPLVCQGEGSLLFEAASLLLWGDAGLSLELRARTVVEMLLHRHYYLQGMIDSKVMLQAVRYSLRSEESPEMTSLPSATLEAIFDADVKATCFPSSFSNVWHLYALASVVQRNIYSIYPLRNLKIRPYFNRVIRPRRCDHTPATLHIMWAGQPLSGHLFRHQYFAPVVGLEEVEAESAHPGPAPLPPPAKTLELLNREPGLSYSHLGEHSSVTKSTFYRWRRQSQEHRQKVATRFSAKHFLQDSFHRGGVVPLQQFLQRFPEISRSTYYAWKHELVGSGACQALTPTEELTKLPERQVAEGLGCSSTAASSPGVVFMQRAKLYLEHCIALNTLVPYRCFKRRFPGISRSTYYNWRRKALRRNPSFKPVPALLESGPPQPVPVGEKALLPWKGGEVGEGAAKATGGGPPAPRAFLPLRVPLSRWQRRLRRAARKQVLGGHLPFCRFRLRYPSLSPSSFWVWKSLARSWPGSLSKLHIPAPTLGRGSRKEAEEKEAGRNVIAAVAPPEGTWPMAASPGQDPNGQVLVMDMLATTKFKAQAKLFLQKRFQSKSFPSYKEFSTLFPLTARSTYYMWKRALYDGLTLVDG</sequence>
<name>VRTN_BOVIN</name>
<protein>
    <recommendedName>
        <fullName>Vertnin</fullName>
    </recommendedName>
</protein>
<keyword id="KW-0217">Developmental protein</keyword>
<keyword id="KW-0238">DNA-binding</keyword>
<keyword id="KW-0539">Nucleus</keyword>
<keyword id="KW-1185">Reference proteome</keyword>
<keyword id="KW-0804">Transcription</keyword>
<keyword id="KW-0805">Transcription regulation</keyword>
<gene>
    <name type="primary">VRTN</name>
</gene>
<dbReference type="EMBL" id="AAFC03091733">
    <property type="status" value="NOT_ANNOTATED_CDS"/>
    <property type="molecule type" value="Genomic_DNA"/>
</dbReference>
<dbReference type="FunCoup" id="E1BP92">
    <property type="interactions" value="5"/>
</dbReference>
<dbReference type="STRING" id="9913.ENSBTAP00000007588"/>
<dbReference type="PaxDb" id="9913-ENSBTAP00000007588"/>
<dbReference type="eggNOG" id="ENOG502SC23">
    <property type="taxonomic scope" value="Eukaryota"/>
</dbReference>
<dbReference type="InParanoid" id="E1BP92"/>
<dbReference type="OrthoDB" id="9869831at2759"/>
<dbReference type="Proteomes" id="UP000009136">
    <property type="component" value="Unplaced"/>
</dbReference>
<dbReference type="GO" id="GO:0000785">
    <property type="term" value="C:chromatin"/>
    <property type="evidence" value="ECO:0000318"/>
    <property type="project" value="GO_Central"/>
</dbReference>
<dbReference type="GO" id="GO:0005634">
    <property type="term" value="C:nucleus"/>
    <property type="evidence" value="ECO:0000250"/>
    <property type="project" value="UniProtKB"/>
</dbReference>
<dbReference type="GO" id="GO:0003677">
    <property type="term" value="F:DNA binding"/>
    <property type="evidence" value="ECO:0007669"/>
    <property type="project" value="UniProtKB-KW"/>
</dbReference>
<dbReference type="GO" id="GO:0006357">
    <property type="term" value="P:regulation of transcription by RNA polymerase II"/>
    <property type="evidence" value="ECO:0000250"/>
    <property type="project" value="UniProtKB"/>
</dbReference>
<dbReference type="CDD" id="cd22791">
    <property type="entry name" value="OTU_VRTN"/>
    <property type="match status" value="1"/>
</dbReference>
<dbReference type="InterPro" id="IPR038822">
    <property type="entry name" value="Vertnin-like"/>
</dbReference>
<dbReference type="InterPro" id="IPR047273">
    <property type="entry name" value="VRTN_OTU_dom"/>
</dbReference>
<dbReference type="PANTHER" id="PTHR16081">
    <property type="entry name" value="VERTNIN"/>
    <property type="match status" value="1"/>
</dbReference>
<dbReference type="PANTHER" id="PTHR16081:SF0">
    <property type="entry name" value="VERTNIN"/>
    <property type="match status" value="1"/>
</dbReference>
<feature type="chain" id="PRO_0000404599" description="Vertnin">
    <location>
        <begin position="1"/>
        <end position="658"/>
    </location>
</feature>
<evidence type="ECO:0000250" key="1">
    <source>
        <dbReference type="UniProtKB" id="E1CHH8"/>
    </source>
</evidence>
<evidence type="ECO:0000250" key="2">
    <source>
        <dbReference type="UniProtKB" id="Q3SYK4"/>
    </source>
</evidence>
<evidence type="ECO:0000305" key="3"/>
<comment type="function">
    <text evidence="2">Acts as a transcription factor that regulates development of thoracic vertebrae.</text>
</comment>
<comment type="subcellular location">
    <subcellularLocation>
        <location evidence="1">Nucleus</location>
    </subcellularLocation>
</comment>
<comment type="similarity">
    <text evidence="3">Belongs to the vertnin family.</text>
</comment>
<organism>
    <name type="scientific">Bos taurus</name>
    <name type="common">Bovine</name>
    <dbReference type="NCBI Taxonomy" id="9913"/>
    <lineage>
        <taxon>Eukaryota</taxon>
        <taxon>Metazoa</taxon>
        <taxon>Chordata</taxon>
        <taxon>Craniata</taxon>
        <taxon>Vertebrata</taxon>
        <taxon>Euteleostomi</taxon>
        <taxon>Mammalia</taxon>
        <taxon>Eutheria</taxon>
        <taxon>Laurasiatheria</taxon>
        <taxon>Artiodactyla</taxon>
        <taxon>Ruminantia</taxon>
        <taxon>Pecora</taxon>
        <taxon>Bovidae</taxon>
        <taxon>Bovinae</taxon>
        <taxon>Bos</taxon>
    </lineage>
</organism>
<reference key="1">
    <citation type="journal article" date="2009" name="Science">
        <title>The genome sequence of taurine cattle: a window to ruminant biology and evolution.</title>
        <authorList>
            <consortium name="The bovine genome sequencing and analysis consortium"/>
        </authorList>
    </citation>
    <scope>NUCLEOTIDE SEQUENCE [LARGE SCALE GENOMIC DNA]</scope>
</reference>